<organism>
    <name type="scientific">Prosthecochloris aestuarii (strain DSM 271 / SK 413)</name>
    <dbReference type="NCBI Taxonomy" id="290512"/>
    <lineage>
        <taxon>Bacteria</taxon>
        <taxon>Pseudomonadati</taxon>
        <taxon>Chlorobiota</taxon>
        <taxon>Chlorobiia</taxon>
        <taxon>Chlorobiales</taxon>
        <taxon>Chlorobiaceae</taxon>
        <taxon>Prosthecochloris</taxon>
    </lineage>
</organism>
<feature type="chain" id="PRO_1000115382" description="Chorismate synthase">
    <location>
        <begin position="1"/>
        <end position="397"/>
    </location>
</feature>
<feature type="binding site" evidence="1">
    <location>
        <position position="40"/>
    </location>
    <ligand>
        <name>NADP(+)</name>
        <dbReference type="ChEBI" id="CHEBI:58349"/>
    </ligand>
</feature>
<feature type="binding site" evidence="1">
    <location>
        <position position="46"/>
    </location>
    <ligand>
        <name>NADP(+)</name>
        <dbReference type="ChEBI" id="CHEBI:58349"/>
    </ligand>
</feature>
<feature type="binding site" evidence="1">
    <location>
        <begin position="129"/>
        <end position="131"/>
    </location>
    <ligand>
        <name>FMN</name>
        <dbReference type="ChEBI" id="CHEBI:58210"/>
    </ligand>
</feature>
<feature type="binding site" evidence="1">
    <location>
        <begin position="257"/>
        <end position="258"/>
    </location>
    <ligand>
        <name>FMN</name>
        <dbReference type="ChEBI" id="CHEBI:58210"/>
    </ligand>
</feature>
<feature type="binding site" evidence="1">
    <location>
        <position position="302"/>
    </location>
    <ligand>
        <name>FMN</name>
        <dbReference type="ChEBI" id="CHEBI:58210"/>
    </ligand>
</feature>
<feature type="binding site" evidence="1">
    <location>
        <begin position="317"/>
        <end position="321"/>
    </location>
    <ligand>
        <name>FMN</name>
        <dbReference type="ChEBI" id="CHEBI:58210"/>
    </ligand>
</feature>
<feature type="binding site" evidence="1">
    <location>
        <position position="343"/>
    </location>
    <ligand>
        <name>FMN</name>
        <dbReference type="ChEBI" id="CHEBI:58210"/>
    </ligand>
</feature>
<dbReference type="EC" id="4.2.3.5" evidence="1"/>
<dbReference type="EMBL" id="CP001108">
    <property type="protein sequence ID" value="ACF46567.1"/>
    <property type="molecule type" value="Genomic_DNA"/>
</dbReference>
<dbReference type="RefSeq" id="WP_012506100.1">
    <property type="nucleotide sequence ID" value="NC_011059.1"/>
</dbReference>
<dbReference type="SMR" id="B4S930"/>
<dbReference type="STRING" id="290512.Paes_1547"/>
<dbReference type="KEGG" id="paa:Paes_1547"/>
<dbReference type="eggNOG" id="COG0082">
    <property type="taxonomic scope" value="Bacteria"/>
</dbReference>
<dbReference type="HOGENOM" id="CLU_034547_2_0_10"/>
<dbReference type="UniPathway" id="UPA00053">
    <property type="reaction ID" value="UER00090"/>
</dbReference>
<dbReference type="Proteomes" id="UP000002725">
    <property type="component" value="Chromosome"/>
</dbReference>
<dbReference type="GO" id="GO:0005829">
    <property type="term" value="C:cytosol"/>
    <property type="evidence" value="ECO:0007669"/>
    <property type="project" value="TreeGrafter"/>
</dbReference>
<dbReference type="GO" id="GO:0004107">
    <property type="term" value="F:chorismate synthase activity"/>
    <property type="evidence" value="ECO:0007669"/>
    <property type="project" value="UniProtKB-UniRule"/>
</dbReference>
<dbReference type="GO" id="GO:0010181">
    <property type="term" value="F:FMN binding"/>
    <property type="evidence" value="ECO:0007669"/>
    <property type="project" value="TreeGrafter"/>
</dbReference>
<dbReference type="GO" id="GO:0008652">
    <property type="term" value="P:amino acid biosynthetic process"/>
    <property type="evidence" value="ECO:0007669"/>
    <property type="project" value="UniProtKB-KW"/>
</dbReference>
<dbReference type="GO" id="GO:0009073">
    <property type="term" value="P:aromatic amino acid family biosynthetic process"/>
    <property type="evidence" value="ECO:0007669"/>
    <property type="project" value="UniProtKB-KW"/>
</dbReference>
<dbReference type="GO" id="GO:0009423">
    <property type="term" value="P:chorismate biosynthetic process"/>
    <property type="evidence" value="ECO:0007669"/>
    <property type="project" value="UniProtKB-UniRule"/>
</dbReference>
<dbReference type="CDD" id="cd07304">
    <property type="entry name" value="Chorismate_synthase"/>
    <property type="match status" value="1"/>
</dbReference>
<dbReference type="FunFam" id="3.60.150.10:FF:000002">
    <property type="entry name" value="Chorismate synthase"/>
    <property type="match status" value="1"/>
</dbReference>
<dbReference type="Gene3D" id="3.60.150.10">
    <property type="entry name" value="Chorismate synthase AroC"/>
    <property type="match status" value="1"/>
</dbReference>
<dbReference type="HAMAP" id="MF_00300">
    <property type="entry name" value="Chorismate_synth"/>
    <property type="match status" value="1"/>
</dbReference>
<dbReference type="InterPro" id="IPR000453">
    <property type="entry name" value="Chorismate_synth"/>
</dbReference>
<dbReference type="InterPro" id="IPR035904">
    <property type="entry name" value="Chorismate_synth_AroC_sf"/>
</dbReference>
<dbReference type="InterPro" id="IPR020541">
    <property type="entry name" value="Chorismate_synthase_CS"/>
</dbReference>
<dbReference type="NCBIfam" id="TIGR00033">
    <property type="entry name" value="aroC"/>
    <property type="match status" value="1"/>
</dbReference>
<dbReference type="NCBIfam" id="NF003793">
    <property type="entry name" value="PRK05382.1"/>
    <property type="match status" value="1"/>
</dbReference>
<dbReference type="PANTHER" id="PTHR21085">
    <property type="entry name" value="CHORISMATE SYNTHASE"/>
    <property type="match status" value="1"/>
</dbReference>
<dbReference type="PANTHER" id="PTHR21085:SF0">
    <property type="entry name" value="CHORISMATE SYNTHASE"/>
    <property type="match status" value="1"/>
</dbReference>
<dbReference type="Pfam" id="PF01264">
    <property type="entry name" value="Chorismate_synt"/>
    <property type="match status" value="1"/>
</dbReference>
<dbReference type="PIRSF" id="PIRSF001456">
    <property type="entry name" value="Chorismate_synth"/>
    <property type="match status" value="1"/>
</dbReference>
<dbReference type="SUPFAM" id="SSF103263">
    <property type="entry name" value="Chorismate synthase, AroC"/>
    <property type="match status" value="1"/>
</dbReference>
<dbReference type="PROSITE" id="PS00787">
    <property type="entry name" value="CHORISMATE_SYNTHASE_1"/>
    <property type="match status" value="1"/>
</dbReference>
<protein>
    <recommendedName>
        <fullName evidence="1">Chorismate synthase</fullName>
        <shortName evidence="1">CS</shortName>
        <ecNumber evidence="1">4.2.3.5</ecNumber>
    </recommendedName>
    <alternativeName>
        <fullName evidence="1">5-enolpyruvylshikimate-3-phosphate phospholyase</fullName>
    </alternativeName>
</protein>
<name>AROC_PROA2</name>
<evidence type="ECO:0000255" key="1">
    <source>
        <dbReference type="HAMAP-Rule" id="MF_00300"/>
    </source>
</evidence>
<sequence length="397" mass="42326">MIRYFTAGESHGPALSAIVEGMPAGISIAPEDINDELARRQRGYGRGGRMNIETDTAAVLSGIRFGKTIGSPITLQIENRDWKNWTVKMAQFEQPEENIPAITIPRPGHADLTGMIKYGFQDIRPVIERASARETAARVAACSLAKVFLRHAGIQIGSYVSAIGPAGEIAPSPKMQELLSQGAASLSRAADASCVRMLDKENEEAAIAAIDKAKEDGDTLGGIIEVFITGVPLGLGTYVQHDRRLDAALAAALLSIQAVKGVEIGSAFDNARRPGSQVHDEMYVEDGSAPVRKTNRAGGIEGSMSNGQVIHLRAAMKPIATLMSPLHSFDLSSMEAHLSHIERSDTCAVPACSVIAEAVVAPILANALLEKTGGDHLEEILERLNAYKASIAKQFQT</sequence>
<gene>
    <name evidence="1" type="primary">aroC</name>
    <name type="ordered locus">Paes_1547</name>
</gene>
<keyword id="KW-0028">Amino-acid biosynthesis</keyword>
<keyword id="KW-0057">Aromatic amino acid biosynthesis</keyword>
<keyword id="KW-0274">FAD</keyword>
<keyword id="KW-0285">Flavoprotein</keyword>
<keyword id="KW-0288">FMN</keyword>
<keyword id="KW-0456">Lyase</keyword>
<keyword id="KW-0521">NADP</keyword>
<comment type="function">
    <text evidence="1">Catalyzes the anti-1,4-elimination of the C-3 phosphate and the C-6 proR hydrogen from 5-enolpyruvylshikimate-3-phosphate (EPSP) to yield chorismate, which is the branch point compound that serves as the starting substrate for the three terminal pathways of aromatic amino acid biosynthesis. This reaction introduces a second double bond into the aromatic ring system.</text>
</comment>
<comment type="catalytic activity">
    <reaction evidence="1">
        <text>5-O-(1-carboxyvinyl)-3-phosphoshikimate = chorismate + phosphate</text>
        <dbReference type="Rhea" id="RHEA:21020"/>
        <dbReference type="ChEBI" id="CHEBI:29748"/>
        <dbReference type="ChEBI" id="CHEBI:43474"/>
        <dbReference type="ChEBI" id="CHEBI:57701"/>
        <dbReference type="EC" id="4.2.3.5"/>
    </reaction>
</comment>
<comment type="cofactor">
    <cofactor evidence="1">
        <name>FMNH2</name>
        <dbReference type="ChEBI" id="CHEBI:57618"/>
    </cofactor>
    <text evidence="1">Reduced FMN (FMNH(2)).</text>
</comment>
<comment type="pathway">
    <text evidence="1">Metabolic intermediate biosynthesis; chorismate biosynthesis; chorismate from D-erythrose 4-phosphate and phosphoenolpyruvate: step 7/7.</text>
</comment>
<comment type="subunit">
    <text evidence="1">Homotetramer.</text>
</comment>
<comment type="similarity">
    <text evidence="1">Belongs to the chorismate synthase family.</text>
</comment>
<accession>B4S930</accession>
<reference key="1">
    <citation type="submission" date="2008-06" db="EMBL/GenBank/DDBJ databases">
        <title>Complete sequence of chromosome of Prosthecochloris aestuarii DSM 271.</title>
        <authorList>
            <consortium name="US DOE Joint Genome Institute"/>
            <person name="Lucas S."/>
            <person name="Copeland A."/>
            <person name="Lapidus A."/>
            <person name="Glavina del Rio T."/>
            <person name="Dalin E."/>
            <person name="Tice H."/>
            <person name="Bruce D."/>
            <person name="Goodwin L."/>
            <person name="Pitluck S."/>
            <person name="Schmutz J."/>
            <person name="Larimer F."/>
            <person name="Land M."/>
            <person name="Hauser L."/>
            <person name="Kyrpides N."/>
            <person name="Anderson I."/>
            <person name="Liu Z."/>
            <person name="Li T."/>
            <person name="Zhao F."/>
            <person name="Overmann J."/>
            <person name="Bryant D.A."/>
            <person name="Richardson P."/>
        </authorList>
    </citation>
    <scope>NUCLEOTIDE SEQUENCE [LARGE SCALE GENOMIC DNA]</scope>
    <source>
        <strain>DSM 271 / SK 413</strain>
    </source>
</reference>
<proteinExistence type="inferred from homology"/>